<name>RUTA_ECOUT</name>
<reference key="1">
    <citation type="journal article" date="2006" name="Proc. Natl. Acad. Sci. U.S.A.">
        <title>Identification of genes subject to positive selection in uropathogenic strains of Escherichia coli: a comparative genomics approach.</title>
        <authorList>
            <person name="Chen S.L."/>
            <person name="Hung C.-S."/>
            <person name="Xu J."/>
            <person name="Reigstad C.S."/>
            <person name="Magrini V."/>
            <person name="Sabo A."/>
            <person name="Blasiar D."/>
            <person name="Bieri T."/>
            <person name="Meyer R.R."/>
            <person name="Ozersky P."/>
            <person name="Armstrong J.R."/>
            <person name="Fulton R.S."/>
            <person name="Latreille J.P."/>
            <person name="Spieth J."/>
            <person name="Hooton T.M."/>
            <person name="Mardis E.R."/>
            <person name="Hultgren S.J."/>
            <person name="Gordon J.I."/>
        </authorList>
    </citation>
    <scope>NUCLEOTIDE SEQUENCE [LARGE SCALE GENOMIC DNA]</scope>
    <source>
        <strain>UTI89 / UPEC</strain>
    </source>
</reference>
<organism>
    <name type="scientific">Escherichia coli (strain UTI89 / UPEC)</name>
    <dbReference type="NCBI Taxonomy" id="364106"/>
    <lineage>
        <taxon>Bacteria</taxon>
        <taxon>Pseudomonadati</taxon>
        <taxon>Pseudomonadota</taxon>
        <taxon>Gammaproteobacteria</taxon>
        <taxon>Enterobacterales</taxon>
        <taxon>Enterobacteriaceae</taxon>
        <taxon>Escherichia</taxon>
    </lineage>
</organism>
<accession>Q1RDK5</accession>
<evidence type="ECO:0000255" key="1">
    <source>
        <dbReference type="HAMAP-Rule" id="MF_01699"/>
    </source>
</evidence>
<keyword id="KW-0285">Flavoprotein</keyword>
<keyword id="KW-0288">FMN</keyword>
<keyword id="KW-0503">Monooxygenase</keyword>
<keyword id="KW-0521">NADP</keyword>
<keyword id="KW-0560">Oxidoreductase</keyword>
<gene>
    <name evidence="1" type="primary">rutA</name>
    <name type="ordered locus">UTI89_C1075</name>
</gene>
<dbReference type="EC" id="1.14.99.46" evidence="1"/>
<dbReference type="EMBL" id="CP000243">
    <property type="protein sequence ID" value="ABE06559.1"/>
    <property type="molecule type" value="Genomic_DNA"/>
</dbReference>
<dbReference type="SMR" id="Q1RDK5"/>
<dbReference type="KEGG" id="eci:UTI89_C1075"/>
<dbReference type="HOGENOM" id="CLU_027853_1_1_6"/>
<dbReference type="Proteomes" id="UP000001952">
    <property type="component" value="Chromosome"/>
</dbReference>
<dbReference type="GO" id="GO:0008726">
    <property type="term" value="F:alkanesulfonate monooxygenase activity"/>
    <property type="evidence" value="ECO:0007669"/>
    <property type="project" value="TreeGrafter"/>
</dbReference>
<dbReference type="GO" id="GO:0052614">
    <property type="term" value="F:uracil oxygenase activity"/>
    <property type="evidence" value="ECO:0007669"/>
    <property type="project" value="UniProtKB-EC"/>
</dbReference>
<dbReference type="GO" id="GO:0046306">
    <property type="term" value="P:alkanesulfonate catabolic process"/>
    <property type="evidence" value="ECO:0007669"/>
    <property type="project" value="TreeGrafter"/>
</dbReference>
<dbReference type="GO" id="GO:0019740">
    <property type="term" value="P:nitrogen utilization"/>
    <property type="evidence" value="ECO:0007669"/>
    <property type="project" value="UniProtKB-UniRule"/>
</dbReference>
<dbReference type="GO" id="GO:0006212">
    <property type="term" value="P:uracil catabolic process"/>
    <property type="evidence" value="ECO:0007669"/>
    <property type="project" value="UniProtKB-UniRule"/>
</dbReference>
<dbReference type="CDD" id="cd01094">
    <property type="entry name" value="Alkanesulfonate_monoxygenase"/>
    <property type="match status" value="1"/>
</dbReference>
<dbReference type="FunFam" id="3.20.20.30:FF:000003">
    <property type="entry name" value="Pyrimidine monooxygenase RutA"/>
    <property type="match status" value="1"/>
</dbReference>
<dbReference type="Gene3D" id="3.20.20.30">
    <property type="entry name" value="Luciferase-like domain"/>
    <property type="match status" value="1"/>
</dbReference>
<dbReference type="HAMAP" id="MF_01699">
    <property type="entry name" value="RutA"/>
    <property type="match status" value="1"/>
</dbReference>
<dbReference type="InterPro" id="IPR011251">
    <property type="entry name" value="Luciferase-like_dom"/>
</dbReference>
<dbReference type="InterPro" id="IPR036661">
    <property type="entry name" value="Luciferase-like_sf"/>
</dbReference>
<dbReference type="InterPro" id="IPR019914">
    <property type="entry name" value="Pyrimidine_monooxygenase_RutA"/>
</dbReference>
<dbReference type="InterPro" id="IPR050172">
    <property type="entry name" value="SsuD_RutA_monooxygenase"/>
</dbReference>
<dbReference type="NCBIfam" id="TIGR03612">
    <property type="entry name" value="RutA"/>
    <property type="match status" value="1"/>
</dbReference>
<dbReference type="PANTHER" id="PTHR42847">
    <property type="entry name" value="ALKANESULFONATE MONOOXYGENASE"/>
    <property type="match status" value="1"/>
</dbReference>
<dbReference type="PANTHER" id="PTHR42847:SF4">
    <property type="entry name" value="ALKANESULFONATE MONOOXYGENASE-RELATED"/>
    <property type="match status" value="1"/>
</dbReference>
<dbReference type="Pfam" id="PF00296">
    <property type="entry name" value="Bac_luciferase"/>
    <property type="match status" value="1"/>
</dbReference>
<dbReference type="SUPFAM" id="SSF51679">
    <property type="entry name" value="Bacterial luciferase-like"/>
    <property type="match status" value="1"/>
</dbReference>
<sequence length="393" mass="43481">MQTSHYAAEKDMQDAAPRLTFTLRDEERLMMKIGVFVPIGNNGWLISTHAPQYMPTFELNKAIVQKAEHYHFDFALSMIKLRGFGGKTEFWDHNLESFTLMAGLAAVTSRIQIYATAATLTLPPAIVARMAATIDSISGGRFGVNLVTGWQKPEYEQMGIWPGDDYFSRRYDYLTEYVQVLRDLWGSGKSDFKGDFFTMDDCRVSPQPSVPMKVICAGQSDAGMAFSARYADFNFCFGKGVNTPTAFAPTAARMKQAAEQTGRDVGSYVLFMVIADETDDAARAKWEHYKAGADEEALSWLTEQSQKDTRSGTDTNVRQMADPTSAVNINMGTLVGSYASVARMLDEVASVPGAEGVLLTFDDFLSGIENFGERIQPLMQCRAHLPALTQEVA</sequence>
<proteinExistence type="inferred from homology"/>
<comment type="function">
    <text evidence="1">Catalyzes the pyrimidine ring opening between N-3 and C-4 by an unusual flavin hydroperoxide-catalyzed mechanism, adding oxygen atoms in the process to yield ureidoacrylate peracid, that immediately reacts with FMN forming ureidoacrylate and FMN-N(5)-oxide. The FMN-N(5)-oxide reacts spontaneously with NADH to produce FMN. Requires the flavin reductase RutF to regenerate FMN in vivo.</text>
</comment>
<comment type="catalytic activity">
    <reaction evidence="1">
        <text>uracil + FMNH2 + NADH + O2 = (Z)-3-ureidoacrylate + FMN + NAD(+) + H2O + H(+)</text>
        <dbReference type="Rhea" id="RHEA:31587"/>
        <dbReference type="ChEBI" id="CHEBI:15377"/>
        <dbReference type="ChEBI" id="CHEBI:15378"/>
        <dbReference type="ChEBI" id="CHEBI:15379"/>
        <dbReference type="ChEBI" id="CHEBI:17568"/>
        <dbReference type="ChEBI" id="CHEBI:57540"/>
        <dbReference type="ChEBI" id="CHEBI:57618"/>
        <dbReference type="ChEBI" id="CHEBI:57945"/>
        <dbReference type="ChEBI" id="CHEBI:58210"/>
        <dbReference type="ChEBI" id="CHEBI:59891"/>
        <dbReference type="EC" id="1.14.99.46"/>
    </reaction>
</comment>
<comment type="catalytic activity">
    <reaction evidence="1">
        <text>thymine + FMNH2 + NADH + O2 = (Z)-2-methylureidoacrylate + FMN + NAD(+) + H2O + H(+)</text>
        <dbReference type="Rhea" id="RHEA:31599"/>
        <dbReference type="ChEBI" id="CHEBI:15377"/>
        <dbReference type="ChEBI" id="CHEBI:15378"/>
        <dbReference type="ChEBI" id="CHEBI:15379"/>
        <dbReference type="ChEBI" id="CHEBI:17821"/>
        <dbReference type="ChEBI" id="CHEBI:57540"/>
        <dbReference type="ChEBI" id="CHEBI:57618"/>
        <dbReference type="ChEBI" id="CHEBI:57945"/>
        <dbReference type="ChEBI" id="CHEBI:58210"/>
        <dbReference type="ChEBI" id="CHEBI:143783"/>
        <dbReference type="EC" id="1.14.99.46"/>
    </reaction>
</comment>
<comment type="induction">
    <text evidence="1">Up-regulated by the nitrogen regulatory protein C (NtrC also called GlnG) and repressed by RutR.</text>
</comment>
<comment type="similarity">
    <text evidence="1">Belongs to the NtaA/SnaA/DszA monooxygenase family. RutA subfamily.</text>
</comment>
<protein>
    <recommendedName>
        <fullName evidence="1">Pyrimidine monooxygenase RutA</fullName>
        <ecNumber evidence="1">1.14.99.46</ecNumber>
    </recommendedName>
</protein>
<feature type="chain" id="PRO_0000402603" description="Pyrimidine monooxygenase RutA">
    <location>
        <begin position="1"/>
        <end position="393"/>
    </location>
</feature>
<feature type="binding site" evidence="1">
    <location>
        <begin position="79"/>
        <end position="80"/>
    </location>
    <ligand>
        <name>FMN</name>
        <dbReference type="ChEBI" id="CHEBI:58210"/>
    </ligand>
</feature>
<feature type="binding site" evidence="1">
    <location>
        <position position="145"/>
    </location>
    <ligand>
        <name>FMN</name>
        <dbReference type="ChEBI" id="CHEBI:58210"/>
    </ligand>
</feature>
<feature type="binding site" evidence="1">
    <location>
        <position position="154"/>
    </location>
    <ligand>
        <name>FMN</name>
        <dbReference type="ChEBI" id="CHEBI:58210"/>
    </ligand>
</feature>
<feature type="binding site" evidence="1">
    <location>
        <begin position="170"/>
        <end position="171"/>
    </location>
    <ligand>
        <name>FMN</name>
        <dbReference type="ChEBI" id="CHEBI:58210"/>
    </ligand>
</feature>
<feature type="binding site" evidence="1">
    <location>
        <position position="220"/>
    </location>
    <ligand>
        <name>FMN</name>
        <dbReference type="ChEBI" id="CHEBI:58210"/>
    </ligand>
</feature>